<evidence type="ECO:0000250" key="1"/>
<evidence type="ECO:0000255" key="2">
    <source>
        <dbReference type="HAMAP-Rule" id="MF_00100"/>
    </source>
</evidence>
<evidence type="ECO:0000256" key="3">
    <source>
        <dbReference type="SAM" id="MobiDB-lite"/>
    </source>
</evidence>
<comment type="function">
    <text evidence="2">One of the essential components for the initiation of protein synthesis. Protects formylmethionyl-tRNA from spontaneous hydrolysis and promotes its binding to the 30S ribosomal subunits. Also involved in the hydrolysis of GTP during the formation of the 70S ribosomal complex.</text>
</comment>
<comment type="subcellular location">
    <subcellularLocation>
        <location evidence="2">Cytoplasm</location>
    </subcellularLocation>
</comment>
<comment type="similarity">
    <text evidence="2">Belongs to the TRAFAC class translation factor GTPase superfamily. Classic translation factor GTPase family. IF-2 subfamily.</text>
</comment>
<keyword id="KW-0963">Cytoplasm</keyword>
<keyword id="KW-0342">GTP-binding</keyword>
<keyword id="KW-0396">Initiation factor</keyword>
<keyword id="KW-0547">Nucleotide-binding</keyword>
<keyword id="KW-0648">Protein biosynthesis</keyword>
<keyword id="KW-1185">Reference proteome</keyword>
<sequence>MALEDMEKRYRISDLSRELQVSPQEVLQFIRMNGGKVGSTSSMVNEEMRGMIFGNFSVEKKMVDEAMKIRAEKQRRLTRLEEQSRKTYEKEQQLRDSMHVAPLVPVAPLHVAQDVIVEVAAPPSAQADHTVQAEPAVQTESAVQTESAVQTESAVQTEPAVQTEPAVQTEPEVQTEPAAQTEPEVQTEPAAQTEPAAQTEPAAQTESAVQTEADLSDVGEVSIVPENVEVIDVPELPMVPVMPVKEEPSVNDQLVSFDIPQNIGGLTVVGTLDMMNPFDRSESGKMKARKKNFKEQADALKSEFDTPAGEEKLVDDKLVVKKKPVKAAGDGDTAPAADDALAGKKKPGKKKKKPDVDEKVISANIRTTISGMDDSAGSVSRQKFRKMRRMEREKEHEAAEAFRESQRAIVRVTEYASPHELAELMGVTAKEIIQKCFALGKFVTINQRLDKESLELIALEFGFEAEFISEIEATAVVAEVDDAEDLLIRPPVVTIMGHVDHGKTSLLDYIRNSNVVAGESGGITQHIGAYEVTVEGNRKITFLDTPGHEAFTAMRARGAQVTDIVILVVAADDSVMPQTIEAINHAKAAGVPIVVAINKIDKPAANPEKIKTQLSEAGVLVEDWGGEYQCQEISAKQGIGIEELMGKLLTEAEIRELKGNFSEDVLASGIIIESELDKGKGVISTVLVQRGYLRVGDPFVAGNTMGRVRALMDERSKRIHEAGPSQPVRVLGFEALPQSGDVLTVMASDRDARELAQKRQVIRREHEFRRSTRVKLDSIARQIREGLMKELSVIIKADTDGSIQALADGLMKIHNEEVKVQIIHQGVGQITETDVLLAAASDAIIIGFRVRPNVNAKKLAEKEDLDVRFYSVIYHVLEDVEKALEGMLSPELHEESLGSLEIRQVFRVPKVGNVGGCYALEGKVFRDSKVRLLRDGVQVYDGQLDTLRRFKDDVKEVDAGYECGLSLKNYDDIKVGDIVEAYKIVEKKRKL</sequence>
<feature type="chain" id="PRO_1000008225" description="Translation initiation factor IF-2">
    <location>
        <begin position="1"/>
        <end position="991"/>
    </location>
</feature>
<feature type="domain" description="tr-type G">
    <location>
        <begin position="488"/>
        <end position="658"/>
    </location>
</feature>
<feature type="region of interest" description="Disordered" evidence="3">
    <location>
        <begin position="126"/>
        <end position="220"/>
    </location>
</feature>
<feature type="region of interest" description="Disordered" evidence="3">
    <location>
        <begin position="325"/>
        <end position="359"/>
    </location>
</feature>
<feature type="region of interest" description="G1" evidence="1">
    <location>
        <begin position="497"/>
        <end position="504"/>
    </location>
</feature>
<feature type="region of interest" description="G2" evidence="1">
    <location>
        <begin position="522"/>
        <end position="526"/>
    </location>
</feature>
<feature type="region of interest" description="G3" evidence="1">
    <location>
        <begin position="544"/>
        <end position="547"/>
    </location>
</feature>
<feature type="region of interest" description="G4" evidence="1">
    <location>
        <begin position="598"/>
        <end position="601"/>
    </location>
</feature>
<feature type="region of interest" description="G5" evidence="1">
    <location>
        <begin position="634"/>
        <end position="636"/>
    </location>
</feature>
<feature type="compositionally biased region" description="Polar residues" evidence="3">
    <location>
        <begin position="138"/>
        <end position="160"/>
    </location>
</feature>
<feature type="compositionally biased region" description="Polar residues" evidence="3">
    <location>
        <begin position="201"/>
        <end position="210"/>
    </location>
</feature>
<feature type="compositionally biased region" description="Low complexity" evidence="3">
    <location>
        <begin position="326"/>
        <end position="340"/>
    </location>
</feature>
<feature type="compositionally biased region" description="Basic residues" evidence="3">
    <location>
        <begin position="343"/>
        <end position="353"/>
    </location>
</feature>
<feature type="binding site" evidence="2">
    <location>
        <begin position="497"/>
        <end position="504"/>
    </location>
    <ligand>
        <name>GTP</name>
        <dbReference type="ChEBI" id="CHEBI:37565"/>
    </ligand>
</feature>
<feature type="binding site" evidence="2">
    <location>
        <begin position="544"/>
        <end position="548"/>
    </location>
    <ligand>
        <name>GTP</name>
        <dbReference type="ChEBI" id="CHEBI:37565"/>
    </ligand>
</feature>
<feature type="binding site" evidence="2">
    <location>
        <begin position="598"/>
        <end position="601"/>
    </location>
    <ligand>
        <name>GTP</name>
        <dbReference type="ChEBI" id="CHEBI:37565"/>
    </ligand>
</feature>
<dbReference type="EMBL" id="CP000492">
    <property type="protein sequence ID" value="ABL64428.1"/>
    <property type="molecule type" value="Genomic_DNA"/>
</dbReference>
<dbReference type="RefSeq" id="WP_011744261.1">
    <property type="nucleotide sequence ID" value="NC_008639.1"/>
</dbReference>
<dbReference type="SMR" id="A1BDF1"/>
<dbReference type="STRING" id="290317.Cpha266_0369"/>
<dbReference type="KEGG" id="cph:Cpha266_0369"/>
<dbReference type="eggNOG" id="COG0532">
    <property type="taxonomic scope" value="Bacteria"/>
</dbReference>
<dbReference type="HOGENOM" id="CLU_006301_0_1_10"/>
<dbReference type="OrthoDB" id="9811804at2"/>
<dbReference type="Proteomes" id="UP000008701">
    <property type="component" value="Chromosome"/>
</dbReference>
<dbReference type="GO" id="GO:0005737">
    <property type="term" value="C:cytoplasm"/>
    <property type="evidence" value="ECO:0007669"/>
    <property type="project" value="UniProtKB-SubCell"/>
</dbReference>
<dbReference type="GO" id="GO:0005525">
    <property type="term" value="F:GTP binding"/>
    <property type="evidence" value="ECO:0007669"/>
    <property type="project" value="UniProtKB-KW"/>
</dbReference>
<dbReference type="GO" id="GO:0003924">
    <property type="term" value="F:GTPase activity"/>
    <property type="evidence" value="ECO:0007669"/>
    <property type="project" value="UniProtKB-UniRule"/>
</dbReference>
<dbReference type="GO" id="GO:0003743">
    <property type="term" value="F:translation initiation factor activity"/>
    <property type="evidence" value="ECO:0007669"/>
    <property type="project" value="UniProtKB-UniRule"/>
</dbReference>
<dbReference type="CDD" id="cd01887">
    <property type="entry name" value="IF2_eIF5B"/>
    <property type="match status" value="1"/>
</dbReference>
<dbReference type="CDD" id="cd03702">
    <property type="entry name" value="IF2_mtIF2_II"/>
    <property type="match status" value="1"/>
</dbReference>
<dbReference type="CDD" id="cd03692">
    <property type="entry name" value="mtIF2_IVc"/>
    <property type="match status" value="1"/>
</dbReference>
<dbReference type="FunFam" id="2.40.30.10:FF:000008">
    <property type="entry name" value="Translation initiation factor IF-2"/>
    <property type="match status" value="1"/>
</dbReference>
<dbReference type="FunFam" id="2.40.30.10:FF:000054">
    <property type="entry name" value="Translation initiation factor IF-2"/>
    <property type="match status" value="1"/>
</dbReference>
<dbReference type="FunFam" id="3.40.50.10050:FF:000001">
    <property type="entry name" value="Translation initiation factor IF-2"/>
    <property type="match status" value="1"/>
</dbReference>
<dbReference type="FunFam" id="3.40.50.300:FF:000019">
    <property type="entry name" value="Translation initiation factor IF-2"/>
    <property type="match status" value="1"/>
</dbReference>
<dbReference type="Gene3D" id="3.40.50.300">
    <property type="entry name" value="P-loop containing nucleotide triphosphate hydrolases"/>
    <property type="match status" value="1"/>
</dbReference>
<dbReference type="Gene3D" id="2.40.30.10">
    <property type="entry name" value="Translation factors"/>
    <property type="match status" value="2"/>
</dbReference>
<dbReference type="Gene3D" id="3.40.50.10050">
    <property type="entry name" value="Translation initiation factor IF- 2, domain 3"/>
    <property type="match status" value="1"/>
</dbReference>
<dbReference type="HAMAP" id="MF_00100_B">
    <property type="entry name" value="IF_2_B"/>
    <property type="match status" value="1"/>
</dbReference>
<dbReference type="InterPro" id="IPR053905">
    <property type="entry name" value="EF-G-like_DII"/>
</dbReference>
<dbReference type="InterPro" id="IPR044145">
    <property type="entry name" value="IF2_II"/>
</dbReference>
<dbReference type="InterPro" id="IPR006847">
    <property type="entry name" value="IF2_N"/>
</dbReference>
<dbReference type="InterPro" id="IPR027417">
    <property type="entry name" value="P-loop_NTPase"/>
</dbReference>
<dbReference type="InterPro" id="IPR005225">
    <property type="entry name" value="Small_GTP-bd"/>
</dbReference>
<dbReference type="InterPro" id="IPR000795">
    <property type="entry name" value="T_Tr_GTP-bd_dom"/>
</dbReference>
<dbReference type="InterPro" id="IPR000178">
    <property type="entry name" value="TF_IF2_bacterial-like"/>
</dbReference>
<dbReference type="InterPro" id="IPR015760">
    <property type="entry name" value="TIF_IF2"/>
</dbReference>
<dbReference type="InterPro" id="IPR023115">
    <property type="entry name" value="TIF_IF2_dom3"/>
</dbReference>
<dbReference type="InterPro" id="IPR036925">
    <property type="entry name" value="TIF_IF2_dom3_sf"/>
</dbReference>
<dbReference type="InterPro" id="IPR009000">
    <property type="entry name" value="Transl_B-barrel_sf"/>
</dbReference>
<dbReference type="NCBIfam" id="TIGR00487">
    <property type="entry name" value="IF-2"/>
    <property type="match status" value="1"/>
</dbReference>
<dbReference type="NCBIfam" id="TIGR00231">
    <property type="entry name" value="small_GTP"/>
    <property type="match status" value="1"/>
</dbReference>
<dbReference type="PANTHER" id="PTHR43381:SF5">
    <property type="entry name" value="TR-TYPE G DOMAIN-CONTAINING PROTEIN"/>
    <property type="match status" value="1"/>
</dbReference>
<dbReference type="PANTHER" id="PTHR43381">
    <property type="entry name" value="TRANSLATION INITIATION FACTOR IF-2-RELATED"/>
    <property type="match status" value="1"/>
</dbReference>
<dbReference type="Pfam" id="PF22042">
    <property type="entry name" value="EF-G_D2"/>
    <property type="match status" value="1"/>
</dbReference>
<dbReference type="Pfam" id="PF00009">
    <property type="entry name" value="GTP_EFTU"/>
    <property type="match status" value="1"/>
</dbReference>
<dbReference type="Pfam" id="PF11987">
    <property type="entry name" value="IF-2"/>
    <property type="match status" value="1"/>
</dbReference>
<dbReference type="Pfam" id="PF04760">
    <property type="entry name" value="IF2_N"/>
    <property type="match status" value="1"/>
</dbReference>
<dbReference type="SUPFAM" id="SSF52156">
    <property type="entry name" value="Initiation factor IF2/eIF5b, domain 3"/>
    <property type="match status" value="1"/>
</dbReference>
<dbReference type="SUPFAM" id="SSF52540">
    <property type="entry name" value="P-loop containing nucleoside triphosphate hydrolases"/>
    <property type="match status" value="1"/>
</dbReference>
<dbReference type="SUPFAM" id="SSF50447">
    <property type="entry name" value="Translation proteins"/>
    <property type="match status" value="2"/>
</dbReference>
<dbReference type="PROSITE" id="PS51722">
    <property type="entry name" value="G_TR_2"/>
    <property type="match status" value="1"/>
</dbReference>
<dbReference type="PROSITE" id="PS01176">
    <property type="entry name" value="IF2"/>
    <property type="match status" value="1"/>
</dbReference>
<accession>A1BDF1</accession>
<name>IF2_CHLPD</name>
<proteinExistence type="inferred from homology"/>
<organism>
    <name type="scientific">Chlorobium phaeobacteroides (strain DSM 266 / SMG 266 / 2430)</name>
    <dbReference type="NCBI Taxonomy" id="290317"/>
    <lineage>
        <taxon>Bacteria</taxon>
        <taxon>Pseudomonadati</taxon>
        <taxon>Chlorobiota</taxon>
        <taxon>Chlorobiia</taxon>
        <taxon>Chlorobiales</taxon>
        <taxon>Chlorobiaceae</taxon>
        <taxon>Chlorobium/Pelodictyon group</taxon>
        <taxon>Chlorobium</taxon>
    </lineage>
</organism>
<protein>
    <recommendedName>
        <fullName evidence="2">Translation initiation factor IF-2</fullName>
    </recommendedName>
</protein>
<gene>
    <name evidence="2" type="primary">infB</name>
    <name type="ordered locus">Cpha266_0369</name>
</gene>
<reference key="1">
    <citation type="submission" date="2006-12" db="EMBL/GenBank/DDBJ databases">
        <title>Complete sequence of Chlorobium phaeobacteroides DSM 266.</title>
        <authorList>
            <consortium name="US DOE Joint Genome Institute"/>
            <person name="Copeland A."/>
            <person name="Lucas S."/>
            <person name="Lapidus A."/>
            <person name="Barry K."/>
            <person name="Detter J.C."/>
            <person name="Glavina del Rio T."/>
            <person name="Hammon N."/>
            <person name="Israni S."/>
            <person name="Pitluck S."/>
            <person name="Goltsman E."/>
            <person name="Schmutz J."/>
            <person name="Larimer F."/>
            <person name="Land M."/>
            <person name="Hauser L."/>
            <person name="Mikhailova N."/>
            <person name="Li T."/>
            <person name="Overmann J."/>
            <person name="Bryant D.A."/>
            <person name="Richardson P."/>
        </authorList>
    </citation>
    <scope>NUCLEOTIDE SEQUENCE [LARGE SCALE GENOMIC DNA]</scope>
    <source>
        <strain>DSM 266 / SMG 266 / 2430</strain>
    </source>
</reference>